<sequence>MARVKRGVQARARHKKVLKQAKGYYGARSRVYRVAYQAVTKAGQYAYRDRRQRKRQFRQLWIARINAAARQNGLSYSKFINGLKKASIEIDRKILADIAVYDKAAFTFLVEKAQASLAA</sequence>
<keyword id="KW-0687">Ribonucleoprotein</keyword>
<keyword id="KW-0689">Ribosomal protein</keyword>
<keyword id="KW-0694">RNA-binding</keyword>
<keyword id="KW-0699">rRNA-binding</keyword>
<reference key="1">
    <citation type="journal article" date="2005" name="Proc. Natl. Acad. Sci. U.S.A.">
        <title>The psychrophilic lifestyle as revealed by the genome sequence of Colwellia psychrerythraea 34H through genomic and proteomic analyses.</title>
        <authorList>
            <person name="Methe B.A."/>
            <person name="Nelson K.E."/>
            <person name="Deming J.W."/>
            <person name="Momen B."/>
            <person name="Melamud E."/>
            <person name="Zhang X."/>
            <person name="Moult J."/>
            <person name="Madupu R."/>
            <person name="Nelson W.C."/>
            <person name="Dodson R.J."/>
            <person name="Brinkac L.M."/>
            <person name="Daugherty S.C."/>
            <person name="Durkin A.S."/>
            <person name="DeBoy R.T."/>
            <person name="Kolonay J.F."/>
            <person name="Sullivan S.A."/>
            <person name="Zhou L."/>
            <person name="Davidsen T.M."/>
            <person name="Wu M."/>
            <person name="Huston A.L."/>
            <person name="Lewis M."/>
            <person name="Weaver B."/>
            <person name="Weidman J.F."/>
            <person name="Khouri H."/>
            <person name="Utterback T.R."/>
            <person name="Feldblyum T.V."/>
            <person name="Fraser C.M."/>
        </authorList>
    </citation>
    <scope>NUCLEOTIDE SEQUENCE [LARGE SCALE GENOMIC DNA]</scope>
    <source>
        <strain>34H / ATCC BAA-681</strain>
    </source>
</reference>
<accession>Q480B2</accession>
<protein>
    <recommendedName>
        <fullName evidence="1">Large ribosomal subunit protein bL20</fullName>
    </recommendedName>
    <alternativeName>
        <fullName evidence="2">50S ribosomal protein L20</fullName>
    </alternativeName>
</protein>
<dbReference type="EMBL" id="CP000083">
    <property type="protein sequence ID" value="AAZ26260.1"/>
    <property type="molecule type" value="Genomic_DNA"/>
</dbReference>
<dbReference type="RefSeq" id="WP_011043699.1">
    <property type="nucleotide sequence ID" value="NC_003910.7"/>
</dbReference>
<dbReference type="SMR" id="Q480B2"/>
<dbReference type="STRING" id="167879.CPS_2906"/>
<dbReference type="KEGG" id="cps:CPS_2906"/>
<dbReference type="eggNOG" id="COG0292">
    <property type="taxonomic scope" value="Bacteria"/>
</dbReference>
<dbReference type="HOGENOM" id="CLU_123265_0_1_6"/>
<dbReference type="Proteomes" id="UP000000547">
    <property type="component" value="Chromosome"/>
</dbReference>
<dbReference type="GO" id="GO:1990904">
    <property type="term" value="C:ribonucleoprotein complex"/>
    <property type="evidence" value="ECO:0007669"/>
    <property type="project" value="UniProtKB-KW"/>
</dbReference>
<dbReference type="GO" id="GO:0005840">
    <property type="term" value="C:ribosome"/>
    <property type="evidence" value="ECO:0007669"/>
    <property type="project" value="UniProtKB-KW"/>
</dbReference>
<dbReference type="GO" id="GO:0019843">
    <property type="term" value="F:rRNA binding"/>
    <property type="evidence" value="ECO:0007669"/>
    <property type="project" value="UniProtKB-UniRule"/>
</dbReference>
<dbReference type="GO" id="GO:0003735">
    <property type="term" value="F:structural constituent of ribosome"/>
    <property type="evidence" value="ECO:0007669"/>
    <property type="project" value="InterPro"/>
</dbReference>
<dbReference type="GO" id="GO:0000027">
    <property type="term" value="P:ribosomal large subunit assembly"/>
    <property type="evidence" value="ECO:0007669"/>
    <property type="project" value="UniProtKB-UniRule"/>
</dbReference>
<dbReference type="GO" id="GO:0006412">
    <property type="term" value="P:translation"/>
    <property type="evidence" value="ECO:0007669"/>
    <property type="project" value="InterPro"/>
</dbReference>
<dbReference type="CDD" id="cd07026">
    <property type="entry name" value="Ribosomal_L20"/>
    <property type="match status" value="1"/>
</dbReference>
<dbReference type="FunFam" id="1.10.1900.20:FF:000001">
    <property type="entry name" value="50S ribosomal protein L20"/>
    <property type="match status" value="1"/>
</dbReference>
<dbReference type="Gene3D" id="6.10.160.10">
    <property type="match status" value="1"/>
</dbReference>
<dbReference type="Gene3D" id="1.10.1900.20">
    <property type="entry name" value="Ribosomal protein L20"/>
    <property type="match status" value="1"/>
</dbReference>
<dbReference type="HAMAP" id="MF_00382">
    <property type="entry name" value="Ribosomal_bL20"/>
    <property type="match status" value="1"/>
</dbReference>
<dbReference type="InterPro" id="IPR005813">
    <property type="entry name" value="Ribosomal_bL20"/>
</dbReference>
<dbReference type="InterPro" id="IPR049946">
    <property type="entry name" value="RIBOSOMAL_L20_CS"/>
</dbReference>
<dbReference type="InterPro" id="IPR035566">
    <property type="entry name" value="Ribosomal_protein_bL20_C"/>
</dbReference>
<dbReference type="NCBIfam" id="TIGR01032">
    <property type="entry name" value="rplT_bact"/>
    <property type="match status" value="1"/>
</dbReference>
<dbReference type="PANTHER" id="PTHR10986">
    <property type="entry name" value="39S RIBOSOMAL PROTEIN L20"/>
    <property type="match status" value="1"/>
</dbReference>
<dbReference type="Pfam" id="PF00453">
    <property type="entry name" value="Ribosomal_L20"/>
    <property type="match status" value="1"/>
</dbReference>
<dbReference type="PRINTS" id="PR00062">
    <property type="entry name" value="RIBOSOMALL20"/>
</dbReference>
<dbReference type="SUPFAM" id="SSF74731">
    <property type="entry name" value="Ribosomal protein L20"/>
    <property type="match status" value="1"/>
</dbReference>
<dbReference type="PROSITE" id="PS00937">
    <property type="entry name" value="RIBOSOMAL_L20"/>
    <property type="match status" value="1"/>
</dbReference>
<organism>
    <name type="scientific">Colwellia psychrerythraea (strain 34H / ATCC BAA-681)</name>
    <name type="common">Vibrio psychroerythus</name>
    <dbReference type="NCBI Taxonomy" id="167879"/>
    <lineage>
        <taxon>Bacteria</taxon>
        <taxon>Pseudomonadati</taxon>
        <taxon>Pseudomonadota</taxon>
        <taxon>Gammaproteobacteria</taxon>
        <taxon>Alteromonadales</taxon>
        <taxon>Colwelliaceae</taxon>
        <taxon>Colwellia</taxon>
    </lineage>
</organism>
<gene>
    <name evidence="1" type="primary">rplT</name>
    <name type="ordered locus">CPS_2906</name>
</gene>
<evidence type="ECO:0000255" key="1">
    <source>
        <dbReference type="HAMAP-Rule" id="MF_00382"/>
    </source>
</evidence>
<evidence type="ECO:0000305" key="2"/>
<proteinExistence type="inferred from homology"/>
<name>RL20_COLP3</name>
<feature type="chain" id="PRO_0000243672" description="Large ribosomal subunit protein bL20">
    <location>
        <begin position="1"/>
        <end position="119"/>
    </location>
</feature>
<comment type="function">
    <text evidence="1">Binds directly to 23S ribosomal RNA and is necessary for the in vitro assembly process of the 50S ribosomal subunit. It is not involved in the protein synthesizing functions of that subunit.</text>
</comment>
<comment type="similarity">
    <text evidence="1">Belongs to the bacterial ribosomal protein bL20 family.</text>
</comment>